<reference key="1">
    <citation type="journal article" date="2005" name="Genome Res.">
        <title>Living with two extremes: conclusions from the genome sequence of Natronomonas pharaonis.</title>
        <authorList>
            <person name="Falb M."/>
            <person name="Pfeiffer F."/>
            <person name="Palm P."/>
            <person name="Rodewald K."/>
            <person name="Hickmann V."/>
            <person name="Tittor J."/>
            <person name="Oesterhelt D."/>
        </authorList>
    </citation>
    <scope>NUCLEOTIDE SEQUENCE [LARGE SCALE GENOMIC DNA]</scope>
    <source>
        <strain>ATCC 35678 / DSM 2160 / CIP 103997 / JCM 8858 / NBRC 14720 / NCIMB 2260 / Gabara</strain>
    </source>
</reference>
<sequence length="149" mass="17127">MTDLKAQKRLAADILDVGENRVRFDPDAQAEIADAITREDIRELIEDGTIEAKTAKGNSRGRARKRQQKRAYGHKKGHGSRKGRSGGRQNEKEDWQSRIRAQRRELRELRDAGDISREQYRELYDMASGGEFDSVADLNRYIDDKHGEQ</sequence>
<proteinExistence type="inferred from homology"/>
<feature type="chain" id="PRO_0000419045" description="Large ribosomal subunit protein eL19">
    <location>
        <begin position="1"/>
        <end position="149"/>
    </location>
</feature>
<feature type="region of interest" description="Disordered" evidence="2">
    <location>
        <begin position="46"/>
        <end position="99"/>
    </location>
</feature>
<feature type="compositionally biased region" description="Basic residues" evidence="2">
    <location>
        <begin position="59"/>
        <end position="85"/>
    </location>
</feature>
<feature type="compositionally biased region" description="Basic and acidic residues" evidence="2">
    <location>
        <begin position="89"/>
        <end position="99"/>
    </location>
</feature>
<name>RL19E_NATPD</name>
<comment type="function">
    <text evidence="1">Binds to the 23S rRNA.</text>
</comment>
<comment type="subunit">
    <text evidence="1">Part of the 50S ribosomal subunit.</text>
</comment>
<comment type="similarity">
    <text evidence="1">Belongs to the eukaryotic ribosomal protein eL19 family.</text>
</comment>
<protein>
    <recommendedName>
        <fullName evidence="1">Large ribosomal subunit protein eL19</fullName>
    </recommendedName>
    <alternativeName>
        <fullName evidence="3">50S ribosomal protein L19e</fullName>
    </alternativeName>
</protein>
<dbReference type="EMBL" id="CR936257">
    <property type="protein sequence ID" value="CAI50536.1"/>
    <property type="molecule type" value="Genomic_DNA"/>
</dbReference>
<dbReference type="RefSeq" id="WP_011324148.1">
    <property type="nucleotide sequence ID" value="NC_007426.1"/>
</dbReference>
<dbReference type="SMR" id="Q3IMX0"/>
<dbReference type="STRING" id="348780.NP_4890A"/>
<dbReference type="EnsemblBacteria" id="CAI50536">
    <property type="protein sequence ID" value="CAI50536"/>
    <property type="gene ID" value="NP_4890A"/>
</dbReference>
<dbReference type="GeneID" id="3703129"/>
<dbReference type="KEGG" id="nph:NP_4890A"/>
<dbReference type="eggNOG" id="arCOG04089">
    <property type="taxonomic scope" value="Archaea"/>
</dbReference>
<dbReference type="HOGENOM" id="CLU_083919_1_1_2"/>
<dbReference type="OrthoDB" id="11624at2157"/>
<dbReference type="Proteomes" id="UP000002698">
    <property type="component" value="Chromosome"/>
</dbReference>
<dbReference type="GO" id="GO:0022625">
    <property type="term" value="C:cytosolic large ribosomal subunit"/>
    <property type="evidence" value="ECO:0007669"/>
    <property type="project" value="InterPro"/>
</dbReference>
<dbReference type="GO" id="GO:0070180">
    <property type="term" value="F:large ribosomal subunit rRNA binding"/>
    <property type="evidence" value="ECO:0007669"/>
    <property type="project" value="UniProtKB-UniRule"/>
</dbReference>
<dbReference type="GO" id="GO:0003735">
    <property type="term" value="F:structural constituent of ribosome"/>
    <property type="evidence" value="ECO:0007669"/>
    <property type="project" value="InterPro"/>
</dbReference>
<dbReference type="GO" id="GO:0006412">
    <property type="term" value="P:translation"/>
    <property type="evidence" value="ECO:0007669"/>
    <property type="project" value="UniProtKB-UniRule"/>
</dbReference>
<dbReference type="CDD" id="cd01418">
    <property type="entry name" value="Ribosomal_L19e_A"/>
    <property type="match status" value="1"/>
</dbReference>
<dbReference type="FunFam" id="1.10.1650.10:FF:000001">
    <property type="entry name" value="Ribosomal protein L19"/>
    <property type="match status" value="1"/>
</dbReference>
<dbReference type="Gene3D" id="1.10.1200.60">
    <property type="match status" value="1"/>
</dbReference>
<dbReference type="Gene3D" id="1.10.1650.10">
    <property type="match status" value="1"/>
</dbReference>
<dbReference type="Gene3D" id="1.20.5.560">
    <property type="entry name" value="Single Heli x bin"/>
    <property type="match status" value="1"/>
</dbReference>
<dbReference type="HAMAP" id="MF_01475">
    <property type="entry name" value="Ribosomal_eL19"/>
    <property type="match status" value="1"/>
</dbReference>
<dbReference type="InterPro" id="IPR035970">
    <property type="entry name" value="60S_ribosomal_eL19_sf"/>
</dbReference>
<dbReference type="InterPro" id="IPR039547">
    <property type="entry name" value="Ribosomal_eL19"/>
</dbReference>
<dbReference type="InterPro" id="IPR033936">
    <property type="entry name" value="Ribosomal_eL19_arc"/>
</dbReference>
<dbReference type="InterPro" id="IPR000196">
    <property type="entry name" value="Ribosomal_eL19_dom"/>
</dbReference>
<dbReference type="InterPro" id="IPR015972">
    <property type="entry name" value="Ribosomal_eL19_dom1"/>
</dbReference>
<dbReference type="InterPro" id="IPR015973">
    <property type="entry name" value="Ribosomal_eL19_dom2"/>
</dbReference>
<dbReference type="InterPro" id="IPR015974">
    <property type="entry name" value="Ribosomal_eL19_dom3"/>
</dbReference>
<dbReference type="NCBIfam" id="NF006343">
    <property type="entry name" value="PRK08570.1"/>
    <property type="match status" value="1"/>
</dbReference>
<dbReference type="PANTHER" id="PTHR10722">
    <property type="entry name" value="60S RIBOSOMAL PROTEIN L19"/>
    <property type="match status" value="1"/>
</dbReference>
<dbReference type="Pfam" id="PF01280">
    <property type="entry name" value="Ribosomal_L19e"/>
    <property type="match status" value="1"/>
</dbReference>
<dbReference type="Pfam" id="PF25476">
    <property type="entry name" value="Ribosomal_L19e_C"/>
    <property type="match status" value="1"/>
</dbReference>
<dbReference type="SMART" id="SM01416">
    <property type="entry name" value="Ribosomal_L19e"/>
    <property type="match status" value="1"/>
</dbReference>
<dbReference type="SUPFAM" id="SSF48140">
    <property type="entry name" value="Ribosomal protein L19 (L19e)"/>
    <property type="match status" value="1"/>
</dbReference>
<accession>Q3IMX0</accession>
<evidence type="ECO:0000255" key="1">
    <source>
        <dbReference type="HAMAP-Rule" id="MF_01475"/>
    </source>
</evidence>
<evidence type="ECO:0000256" key="2">
    <source>
        <dbReference type="SAM" id="MobiDB-lite"/>
    </source>
</evidence>
<evidence type="ECO:0000305" key="3"/>
<keyword id="KW-1185">Reference proteome</keyword>
<keyword id="KW-0687">Ribonucleoprotein</keyword>
<keyword id="KW-0689">Ribosomal protein</keyword>
<keyword id="KW-0694">RNA-binding</keyword>
<keyword id="KW-0699">rRNA-binding</keyword>
<gene>
    <name evidence="1" type="primary">rpl19e</name>
    <name type="ordered locus">NP_4890A</name>
</gene>
<organism>
    <name type="scientific">Natronomonas pharaonis (strain ATCC 35678 / DSM 2160 / CIP 103997 / JCM 8858 / NBRC 14720 / NCIMB 2260 / Gabara)</name>
    <name type="common">Halobacterium pharaonis</name>
    <dbReference type="NCBI Taxonomy" id="348780"/>
    <lineage>
        <taxon>Archaea</taxon>
        <taxon>Methanobacteriati</taxon>
        <taxon>Methanobacteriota</taxon>
        <taxon>Stenosarchaea group</taxon>
        <taxon>Halobacteria</taxon>
        <taxon>Halobacteriales</taxon>
        <taxon>Haloarculaceae</taxon>
        <taxon>Natronomonas</taxon>
    </lineage>
</organism>